<feature type="chain" id="PRO_0000166894" description="Malate synthase G 1">
    <location>
        <begin position="1"/>
        <end position="725"/>
    </location>
</feature>
<feature type="active site" description="Proton acceptor" evidence="1">
    <location>
        <position position="340"/>
    </location>
</feature>
<feature type="active site" description="Proton donor" evidence="1">
    <location>
        <position position="631"/>
    </location>
</feature>
<feature type="binding site" evidence="1">
    <location>
        <position position="118"/>
    </location>
    <ligand>
        <name>acetyl-CoA</name>
        <dbReference type="ChEBI" id="CHEBI:57288"/>
    </ligand>
</feature>
<feature type="binding site" evidence="1">
    <location>
        <begin position="125"/>
        <end position="126"/>
    </location>
    <ligand>
        <name>acetyl-CoA</name>
        <dbReference type="ChEBI" id="CHEBI:57288"/>
    </ligand>
</feature>
<feature type="binding site" evidence="1">
    <location>
        <position position="276"/>
    </location>
    <ligand>
        <name>acetyl-CoA</name>
        <dbReference type="ChEBI" id="CHEBI:57288"/>
    </ligand>
</feature>
<feature type="binding site" evidence="1">
    <location>
        <position position="313"/>
    </location>
    <ligand>
        <name>acetyl-CoA</name>
        <dbReference type="ChEBI" id="CHEBI:57288"/>
    </ligand>
</feature>
<feature type="binding site" evidence="1">
    <location>
        <position position="340"/>
    </location>
    <ligand>
        <name>glyoxylate</name>
        <dbReference type="ChEBI" id="CHEBI:36655"/>
    </ligand>
</feature>
<feature type="binding site" evidence="1">
    <location>
        <position position="432"/>
    </location>
    <ligand>
        <name>glyoxylate</name>
        <dbReference type="ChEBI" id="CHEBI:36655"/>
    </ligand>
</feature>
<feature type="binding site" evidence="1">
    <location>
        <position position="432"/>
    </location>
    <ligand>
        <name>Mg(2+)</name>
        <dbReference type="ChEBI" id="CHEBI:18420"/>
    </ligand>
</feature>
<feature type="binding site" evidence="1">
    <location>
        <begin position="457"/>
        <end position="460"/>
    </location>
    <ligand>
        <name>glyoxylate</name>
        <dbReference type="ChEBI" id="CHEBI:36655"/>
    </ligand>
</feature>
<feature type="binding site" evidence="1">
    <location>
        <position position="460"/>
    </location>
    <ligand>
        <name>Mg(2+)</name>
        <dbReference type="ChEBI" id="CHEBI:18420"/>
    </ligand>
</feature>
<feature type="binding site" evidence="1">
    <location>
        <position position="541"/>
    </location>
    <ligand>
        <name>acetyl-CoA</name>
        <dbReference type="ChEBI" id="CHEBI:57288"/>
    </ligand>
</feature>
<feature type="modified residue" description="Cysteine sulfenic acid (-SOH)" evidence="1">
    <location>
        <position position="617"/>
    </location>
</feature>
<evidence type="ECO:0000255" key="1">
    <source>
        <dbReference type="HAMAP-Rule" id="MF_00641"/>
    </source>
</evidence>
<comment type="function">
    <text evidence="1">Involved in the glycolate utilization. Catalyzes the condensation and subsequent hydrolysis of acetyl-coenzyme A (acetyl-CoA) and glyoxylate to form malate and CoA.</text>
</comment>
<comment type="catalytic activity">
    <reaction evidence="1">
        <text>glyoxylate + acetyl-CoA + H2O = (S)-malate + CoA + H(+)</text>
        <dbReference type="Rhea" id="RHEA:18181"/>
        <dbReference type="ChEBI" id="CHEBI:15377"/>
        <dbReference type="ChEBI" id="CHEBI:15378"/>
        <dbReference type="ChEBI" id="CHEBI:15589"/>
        <dbReference type="ChEBI" id="CHEBI:36655"/>
        <dbReference type="ChEBI" id="CHEBI:57287"/>
        <dbReference type="ChEBI" id="CHEBI:57288"/>
        <dbReference type="EC" id="2.3.3.9"/>
    </reaction>
</comment>
<comment type="cofactor">
    <cofactor evidence="1">
        <name>Mg(2+)</name>
        <dbReference type="ChEBI" id="CHEBI:18420"/>
    </cofactor>
</comment>
<comment type="pathway">
    <text evidence="1">Carbohydrate metabolism; glyoxylate cycle; (S)-malate from isocitrate: step 2/2.</text>
</comment>
<comment type="subunit">
    <text evidence="1">Monomer.</text>
</comment>
<comment type="subcellular location">
    <subcellularLocation>
        <location evidence="1">Cytoplasm</location>
    </subcellularLocation>
</comment>
<comment type="similarity">
    <text evidence="1">Belongs to the malate synthase family. GlcB subfamily.</text>
</comment>
<keyword id="KW-0963">Cytoplasm</keyword>
<keyword id="KW-0329">Glyoxylate bypass</keyword>
<keyword id="KW-0460">Magnesium</keyword>
<keyword id="KW-0479">Metal-binding</keyword>
<keyword id="KW-0558">Oxidation</keyword>
<keyword id="KW-1185">Reference proteome</keyword>
<keyword id="KW-0808">Transferase</keyword>
<keyword id="KW-0816">Tricarboxylic acid cycle</keyword>
<gene>
    <name evidence="1" type="primary">glcB1</name>
    <name type="synonym">glcB-1</name>
    <name type="ordered locus">PSPTO_0480</name>
</gene>
<organism>
    <name type="scientific">Pseudomonas syringae pv. tomato (strain ATCC BAA-871 / DC3000)</name>
    <dbReference type="NCBI Taxonomy" id="223283"/>
    <lineage>
        <taxon>Bacteria</taxon>
        <taxon>Pseudomonadati</taxon>
        <taxon>Pseudomonadota</taxon>
        <taxon>Gammaproteobacteria</taxon>
        <taxon>Pseudomonadales</taxon>
        <taxon>Pseudomonadaceae</taxon>
        <taxon>Pseudomonas</taxon>
    </lineage>
</organism>
<reference key="1">
    <citation type="journal article" date="2003" name="Proc. Natl. Acad. Sci. U.S.A.">
        <title>The complete genome sequence of the Arabidopsis and tomato pathogen Pseudomonas syringae pv. tomato DC3000.</title>
        <authorList>
            <person name="Buell C.R."/>
            <person name="Joardar V."/>
            <person name="Lindeberg M."/>
            <person name="Selengut J."/>
            <person name="Paulsen I.T."/>
            <person name="Gwinn M.L."/>
            <person name="Dodson R.J."/>
            <person name="DeBoy R.T."/>
            <person name="Durkin A.S."/>
            <person name="Kolonay J.F."/>
            <person name="Madupu R."/>
            <person name="Daugherty S.C."/>
            <person name="Brinkac L.M."/>
            <person name="Beanan M.J."/>
            <person name="Haft D.H."/>
            <person name="Nelson W.C."/>
            <person name="Davidsen T.M."/>
            <person name="Zafar N."/>
            <person name="Zhou L."/>
            <person name="Liu J."/>
            <person name="Yuan Q."/>
            <person name="Khouri H.M."/>
            <person name="Fedorova N.B."/>
            <person name="Tran B."/>
            <person name="Russell D."/>
            <person name="Berry K.J."/>
            <person name="Utterback T.R."/>
            <person name="Van Aken S.E."/>
            <person name="Feldblyum T.V."/>
            <person name="D'Ascenzo M."/>
            <person name="Deng W.-L."/>
            <person name="Ramos A.R."/>
            <person name="Alfano J.R."/>
            <person name="Cartinhour S."/>
            <person name="Chatterjee A.K."/>
            <person name="Delaney T.P."/>
            <person name="Lazarowitz S.G."/>
            <person name="Martin G.B."/>
            <person name="Schneider D.J."/>
            <person name="Tang X."/>
            <person name="Bender C.L."/>
            <person name="White O."/>
            <person name="Fraser C.M."/>
            <person name="Collmer A."/>
        </authorList>
    </citation>
    <scope>NUCLEOTIDE SEQUENCE [LARGE SCALE GENOMIC DNA]</scope>
    <source>
        <strain>ATCC BAA-871 / DC3000</strain>
    </source>
</reference>
<protein>
    <recommendedName>
        <fullName evidence="1">Malate synthase G 1</fullName>
        <ecNumber evidence="1">2.3.3.9</ecNumber>
    </recommendedName>
</protein>
<accession>Q88AB2</accession>
<sequence length="725" mass="79144">MTEYVQVGDLQVARVLFDFVQNEATPGTGVDAGAFWAGADQLIHDLAPKNKALLAQRDELQAQIDAWHQSRAGQAHDASAYKAFLQEIGYLLPEAADFQITTQNVDEEIATMAGPQLVVPVMNARFALNASNARWGSLYDALYGTDAISEEGGAEKGKGYNKVRGDKVIAFARAFLDQAAPLAAGSHVDSTAYKLIDGRLVISLKGGSNTGLRDDAQLVGFQGDASAPFAVLFKHNGLHFELQIDAASPVGQTDPAGVKDIVMEAALTTIMDCEDSIAAVDADDKVVVYRNWLGLMKGDLVESVSKGGETFTRTMNPDRVYTTPQGGEVTLHGRSLLFIRNVGHLMTIDAILDKHGNEVPEGILDGLLTSLAAIHNLNGNNTRSNSRSGSMYIVKPKMHGPQEAAFTNELFGRIEQVLGLPRNTLKVGIMDEERRTTVNLKACIQAASERVVFINTGFLDRTGDEIHTSMEAGPVVRKAQMKAEKWISAYENSNVDIGLKCGLQGRAQIGKGMWAMPDLMAAMLEQKIAHPLAGANTAWVPSPTAAALHALHYHKVDVFARQAELAQREQASVDDILTIPLALNTDWTPEQVQNELDNNAQGILGYVVRWIDQGVGCSKVPDINDIGLMEDRATLRISSQHMTNWLRHGIVTETQVLESLKRMAPVVDRQNANDPLYRPLSPDFDSNIAFQAAVELVIEGTRQPNGYTEPVLHRRRREFKAKNRV</sequence>
<name>MASZ1_PSESM</name>
<proteinExistence type="inferred from homology"/>
<dbReference type="EC" id="2.3.3.9" evidence="1"/>
<dbReference type="EMBL" id="AE016853">
    <property type="protein sequence ID" value="AAO54024.1"/>
    <property type="molecule type" value="Genomic_DNA"/>
</dbReference>
<dbReference type="RefSeq" id="NP_790329.1">
    <property type="nucleotide sequence ID" value="NC_004578.1"/>
</dbReference>
<dbReference type="RefSeq" id="WP_005763731.1">
    <property type="nucleotide sequence ID" value="NC_004578.1"/>
</dbReference>
<dbReference type="SMR" id="Q88AB2"/>
<dbReference type="STRING" id="223283.PSPTO_0480"/>
<dbReference type="GeneID" id="1182089"/>
<dbReference type="KEGG" id="pst:PSPTO_0480"/>
<dbReference type="PATRIC" id="fig|223283.9.peg.497"/>
<dbReference type="eggNOG" id="COG2225">
    <property type="taxonomic scope" value="Bacteria"/>
</dbReference>
<dbReference type="HOGENOM" id="CLU_028446_1_0_6"/>
<dbReference type="OrthoDB" id="9762054at2"/>
<dbReference type="PhylomeDB" id="Q88AB2"/>
<dbReference type="UniPathway" id="UPA00703">
    <property type="reaction ID" value="UER00720"/>
</dbReference>
<dbReference type="Proteomes" id="UP000002515">
    <property type="component" value="Chromosome"/>
</dbReference>
<dbReference type="GO" id="GO:0005829">
    <property type="term" value="C:cytosol"/>
    <property type="evidence" value="ECO:0007669"/>
    <property type="project" value="TreeGrafter"/>
</dbReference>
<dbReference type="GO" id="GO:0000287">
    <property type="term" value="F:magnesium ion binding"/>
    <property type="evidence" value="ECO:0007669"/>
    <property type="project" value="TreeGrafter"/>
</dbReference>
<dbReference type="GO" id="GO:0004474">
    <property type="term" value="F:malate synthase activity"/>
    <property type="evidence" value="ECO:0007669"/>
    <property type="project" value="UniProtKB-UniRule"/>
</dbReference>
<dbReference type="GO" id="GO:0009436">
    <property type="term" value="P:glyoxylate catabolic process"/>
    <property type="evidence" value="ECO:0007669"/>
    <property type="project" value="TreeGrafter"/>
</dbReference>
<dbReference type="GO" id="GO:0006097">
    <property type="term" value="P:glyoxylate cycle"/>
    <property type="evidence" value="ECO:0007669"/>
    <property type="project" value="UniProtKB-UniRule"/>
</dbReference>
<dbReference type="GO" id="GO:0006099">
    <property type="term" value="P:tricarboxylic acid cycle"/>
    <property type="evidence" value="ECO:0007669"/>
    <property type="project" value="UniProtKB-KW"/>
</dbReference>
<dbReference type="CDD" id="cd00728">
    <property type="entry name" value="malate_synt_G"/>
    <property type="match status" value="1"/>
</dbReference>
<dbReference type="FunFam" id="3.20.20.360:FF:000002">
    <property type="entry name" value="Malate synthase G"/>
    <property type="match status" value="1"/>
</dbReference>
<dbReference type="Gene3D" id="3.20.20.360">
    <property type="entry name" value="Malate synthase, domain 3"/>
    <property type="match status" value="2"/>
</dbReference>
<dbReference type="Gene3D" id="1.20.1220.12">
    <property type="entry name" value="Malate synthase, domain III"/>
    <property type="match status" value="1"/>
</dbReference>
<dbReference type="HAMAP" id="MF_00641">
    <property type="entry name" value="Malate_synth_G"/>
    <property type="match status" value="1"/>
</dbReference>
<dbReference type="InterPro" id="IPR044856">
    <property type="entry name" value="Malate_synth_C_sf"/>
</dbReference>
<dbReference type="InterPro" id="IPR011076">
    <property type="entry name" value="Malate_synth_sf"/>
</dbReference>
<dbReference type="InterPro" id="IPR001465">
    <property type="entry name" value="Malate_synthase_TIM"/>
</dbReference>
<dbReference type="InterPro" id="IPR006253">
    <property type="entry name" value="Malate_synthG"/>
</dbReference>
<dbReference type="InterPro" id="IPR048355">
    <property type="entry name" value="MS_C"/>
</dbReference>
<dbReference type="InterPro" id="IPR048356">
    <property type="entry name" value="MS_N"/>
</dbReference>
<dbReference type="InterPro" id="IPR046363">
    <property type="entry name" value="MS_N_TIM-barrel_dom"/>
</dbReference>
<dbReference type="InterPro" id="IPR048357">
    <property type="entry name" value="MSG_insertion"/>
</dbReference>
<dbReference type="NCBIfam" id="TIGR01345">
    <property type="entry name" value="malate_syn_G"/>
    <property type="match status" value="1"/>
</dbReference>
<dbReference type="NCBIfam" id="NF002825">
    <property type="entry name" value="PRK02999.1"/>
    <property type="match status" value="1"/>
</dbReference>
<dbReference type="PANTHER" id="PTHR42739">
    <property type="entry name" value="MALATE SYNTHASE G"/>
    <property type="match status" value="1"/>
</dbReference>
<dbReference type="PANTHER" id="PTHR42739:SF1">
    <property type="entry name" value="MALATE SYNTHASE G"/>
    <property type="match status" value="1"/>
</dbReference>
<dbReference type="Pfam" id="PF20659">
    <property type="entry name" value="MS_C"/>
    <property type="match status" value="1"/>
</dbReference>
<dbReference type="Pfam" id="PF20656">
    <property type="entry name" value="MS_N"/>
    <property type="match status" value="1"/>
</dbReference>
<dbReference type="Pfam" id="PF01274">
    <property type="entry name" value="MS_TIM-barrel"/>
    <property type="match status" value="1"/>
</dbReference>
<dbReference type="Pfam" id="PF20658">
    <property type="entry name" value="MSG_insertion"/>
    <property type="match status" value="1"/>
</dbReference>
<dbReference type="SUPFAM" id="SSF51645">
    <property type="entry name" value="Malate synthase G"/>
    <property type="match status" value="1"/>
</dbReference>